<accession>P29676</accession>
<accession>P70504</accession>
<dbReference type="EMBL" id="D10763">
    <property type="protein sequence ID" value="BAA01593.1"/>
    <property type="molecule type" value="mRNA"/>
</dbReference>
<dbReference type="EMBL" id="L10608">
    <property type="protein sequence ID" value="AAA41126.1"/>
    <property type="molecule type" value="mRNA"/>
</dbReference>
<dbReference type="PIR" id="S28148">
    <property type="entry name" value="S28148"/>
</dbReference>
<dbReference type="RefSeq" id="NP_058697.1">
    <property type="nucleotide sequence ID" value="NM_017001.2"/>
</dbReference>
<dbReference type="SMR" id="P29676"/>
<dbReference type="FunCoup" id="P29676">
    <property type="interactions" value="67"/>
</dbReference>
<dbReference type="STRING" id="10116.ENSRNOP00000001914"/>
<dbReference type="GlyCosmos" id="P29676">
    <property type="glycosylation" value="3 sites, No reported glycans"/>
</dbReference>
<dbReference type="GlyGen" id="P29676">
    <property type="glycosylation" value="4 sites"/>
</dbReference>
<dbReference type="PhosphoSitePlus" id="P29676"/>
<dbReference type="PaxDb" id="10116-ENSRNOP00000001914"/>
<dbReference type="Ensembl" id="ENSRNOT00000001914.5">
    <property type="protein sequence ID" value="ENSRNOP00000001914.3"/>
    <property type="gene ID" value="ENSRNOG00000001412.5"/>
</dbReference>
<dbReference type="GeneID" id="24335"/>
<dbReference type="KEGG" id="rno:24335"/>
<dbReference type="UCSC" id="RGD:2559">
    <property type="organism name" value="rat"/>
</dbReference>
<dbReference type="AGR" id="RGD:2559"/>
<dbReference type="CTD" id="2056"/>
<dbReference type="RGD" id="2559">
    <property type="gene designation" value="Epo"/>
</dbReference>
<dbReference type="eggNOG" id="ENOG502RXRC">
    <property type="taxonomic scope" value="Eukaryota"/>
</dbReference>
<dbReference type="GeneTree" id="ENSGT00390000017226"/>
<dbReference type="HOGENOM" id="CLU_110946_0_0_1"/>
<dbReference type="InParanoid" id="P29676"/>
<dbReference type="OMA" id="AMEFPRL"/>
<dbReference type="OrthoDB" id="9892121at2759"/>
<dbReference type="PhylomeDB" id="P29676"/>
<dbReference type="TreeFam" id="TF333413"/>
<dbReference type="Reactome" id="R-RNO-9027276">
    <property type="pathway name" value="Erythropoietin activates Phosphoinositide-3-kinase (PI3K)"/>
</dbReference>
<dbReference type="Reactome" id="R-RNO-9027284">
    <property type="pathway name" value="Erythropoietin activates RAS"/>
</dbReference>
<dbReference type="PRO" id="PR:P29676"/>
<dbReference type="Proteomes" id="UP000002494">
    <property type="component" value="Chromosome 12"/>
</dbReference>
<dbReference type="Bgee" id="ENSRNOG00000001412">
    <property type="expression patterns" value="Expressed in ovary and 3 other cell types or tissues"/>
</dbReference>
<dbReference type="GO" id="GO:0044297">
    <property type="term" value="C:cell body"/>
    <property type="evidence" value="ECO:0000314"/>
    <property type="project" value="RGD"/>
</dbReference>
<dbReference type="GO" id="GO:0009986">
    <property type="term" value="C:cell surface"/>
    <property type="evidence" value="ECO:0000266"/>
    <property type="project" value="RGD"/>
</dbReference>
<dbReference type="GO" id="GO:0005615">
    <property type="term" value="C:extracellular space"/>
    <property type="evidence" value="ECO:0000314"/>
    <property type="project" value="RGD"/>
</dbReference>
<dbReference type="GO" id="GO:0005125">
    <property type="term" value="F:cytokine activity"/>
    <property type="evidence" value="ECO:0000266"/>
    <property type="project" value="RGD"/>
</dbReference>
<dbReference type="GO" id="GO:0005128">
    <property type="term" value="F:erythropoietin receptor binding"/>
    <property type="evidence" value="ECO:0000250"/>
    <property type="project" value="UniProtKB"/>
</dbReference>
<dbReference type="GO" id="GO:0005179">
    <property type="term" value="F:hormone activity"/>
    <property type="evidence" value="ECO:0000266"/>
    <property type="project" value="RGD"/>
</dbReference>
<dbReference type="GO" id="GO:0030295">
    <property type="term" value="F:protein kinase activator activity"/>
    <property type="evidence" value="ECO:0000266"/>
    <property type="project" value="RGD"/>
</dbReference>
<dbReference type="GO" id="GO:0006953">
    <property type="term" value="P:acute-phase response"/>
    <property type="evidence" value="ECO:0000270"/>
    <property type="project" value="RGD"/>
</dbReference>
<dbReference type="GO" id="GO:0006915">
    <property type="term" value="P:apoptotic process"/>
    <property type="evidence" value="ECO:0000266"/>
    <property type="project" value="RGD"/>
</dbReference>
<dbReference type="GO" id="GO:0097696">
    <property type="term" value="P:cell surface receptor signaling pathway via STAT"/>
    <property type="evidence" value="ECO:0000266"/>
    <property type="project" value="RGD"/>
</dbReference>
<dbReference type="GO" id="GO:0071474">
    <property type="term" value="P:cellular hyperosmotic response"/>
    <property type="evidence" value="ECO:0000266"/>
    <property type="project" value="RGD"/>
</dbReference>
<dbReference type="GO" id="GO:0007566">
    <property type="term" value="P:embryo implantation"/>
    <property type="evidence" value="ECO:0000266"/>
    <property type="project" value="RGD"/>
</dbReference>
<dbReference type="GO" id="GO:0030218">
    <property type="term" value="P:erythrocyte differentiation"/>
    <property type="evidence" value="ECO:0000250"/>
    <property type="project" value="UniProtKB"/>
</dbReference>
<dbReference type="GO" id="GO:0043249">
    <property type="term" value="P:erythrocyte maturation"/>
    <property type="evidence" value="ECO:0007669"/>
    <property type="project" value="UniProtKB-KW"/>
</dbReference>
<dbReference type="GO" id="GO:0038162">
    <property type="term" value="P:erythropoietin-mediated signaling pathway"/>
    <property type="evidence" value="ECO:0000250"/>
    <property type="project" value="UniProtKB"/>
</dbReference>
<dbReference type="GO" id="GO:0042541">
    <property type="term" value="P:hemoglobin biosynthetic process"/>
    <property type="evidence" value="ECO:0000266"/>
    <property type="project" value="RGD"/>
</dbReference>
<dbReference type="GO" id="GO:0033028">
    <property type="term" value="P:myeloid cell apoptotic process"/>
    <property type="evidence" value="ECO:0000266"/>
    <property type="project" value="RGD"/>
</dbReference>
<dbReference type="GO" id="GO:0043066">
    <property type="term" value="P:negative regulation of apoptotic process"/>
    <property type="evidence" value="ECO:0000266"/>
    <property type="project" value="RGD"/>
</dbReference>
<dbReference type="GO" id="GO:0010523">
    <property type="term" value="P:negative regulation of calcium ion transport into cytosol"/>
    <property type="evidence" value="ECO:0000266"/>
    <property type="project" value="RGD"/>
</dbReference>
<dbReference type="GO" id="GO:1902251">
    <property type="term" value="P:negative regulation of erythrocyte apoptotic process"/>
    <property type="evidence" value="ECO:0000266"/>
    <property type="project" value="RGD"/>
</dbReference>
<dbReference type="GO" id="GO:1902219">
    <property type="term" value="P:negative regulation of intrinsic apoptotic signaling pathway in response to osmotic stress"/>
    <property type="evidence" value="ECO:0000266"/>
    <property type="project" value="RGD"/>
</dbReference>
<dbReference type="GO" id="GO:0033033">
    <property type="term" value="P:negative regulation of myeloid cell apoptotic process"/>
    <property type="evidence" value="ECO:0000266"/>
    <property type="project" value="RGD"/>
</dbReference>
<dbReference type="GO" id="GO:0000122">
    <property type="term" value="P:negative regulation of transcription by RNA polymerase II"/>
    <property type="evidence" value="ECO:0000266"/>
    <property type="project" value="RGD"/>
</dbReference>
<dbReference type="GO" id="GO:0042104">
    <property type="term" value="P:positive regulation of activated T cell proliferation"/>
    <property type="evidence" value="ECO:0000314"/>
    <property type="project" value="RGD"/>
</dbReference>
<dbReference type="GO" id="GO:0008284">
    <property type="term" value="P:positive regulation of cell population proliferation"/>
    <property type="evidence" value="ECO:0000315"/>
    <property type="project" value="RGD"/>
</dbReference>
<dbReference type="GO" id="GO:0045893">
    <property type="term" value="P:positive regulation of DNA-templated transcription"/>
    <property type="evidence" value="ECO:0000266"/>
    <property type="project" value="RGD"/>
</dbReference>
<dbReference type="GO" id="GO:0070374">
    <property type="term" value="P:positive regulation of ERK1 and ERK2 cascade"/>
    <property type="evidence" value="ECO:0000315"/>
    <property type="project" value="RGD"/>
</dbReference>
<dbReference type="GO" id="GO:0045666">
    <property type="term" value="P:positive regulation of neuron differentiation"/>
    <property type="evidence" value="ECO:0000314"/>
    <property type="project" value="RGD"/>
</dbReference>
<dbReference type="GO" id="GO:0010976">
    <property type="term" value="P:positive regulation of neuron projection development"/>
    <property type="evidence" value="ECO:0000314"/>
    <property type="project" value="RGD"/>
</dbReference>
<dbReference type="GO" id="GO:0046579">
    <property type="term" value="P:positive regulation of Ras protein signal transduction"/>
    <property type="evidence" value="ECO:0000266"/>
    <property type="project" value="RGD"/>
</dbReference>
<dbReference type="GO" id="GO:0006357">
    <property type="term" value="P:regulation of transcription by RNA polymerase II"/>
    <property type="evidence" value="ECO:0000266"/>
    <property type="project" value="RGD"/>
</dbReference>
<dbReference type="GO" id="GO:0048678">
    <property type="term" value="P:response to axon injury"/>
    <property type="evidence" value="ECO:0000270"/>
    <property type="project" value="RGD"/>
</dbReference>
<dbReference type="GO" id="GO:0071548">
    <property type="term" value="P:response to dexamethasone"/>
    <property type="evidence" value="ECO:0000270"/>
    <property type="project" value="RGD"/>
</dbReference>
<dbReference type="GO" id="GO:0051602">
    <property type="term" value="P:response to electrical stimulus"/>
    <property type="evidence" value="ECO:0000270"/>
    <property type="project" value="RGD"/>
</dbReference>
<dbReference type="GO" id="GO:0043627">
    <property type="term" value="P:response to estrogen"/>
    <property type="evidence" value="ECO:0000270"/>
    <property type="project" value="RGD"/>
</dbReference>
<dbReference type="GO" id="GO:0055093">
    <property type="term" value="P:response to hyperoxia"/>
    <property type="evidence" value="ECO:0000270"/>
    <property type="project" value="RGD"/>
</dbReference>
<dbReference type="GO" id="GO:0001666">
    <property type="term" value="P:response to hypoxia"/>
    <property type="evidence" value="ECO:0000270"/>
    <property type="project" value="RGD"/>
</dbReference>
<dbReference type="GO" id="GO:0070555">
    <property type="term" value="P:response to interleukin-1"/>
    <property type="evidence" value="ECO:0000270"/>
    <property type="project" value="RGD"/>
</dbReference>
<dbReference type="GO" id="GO:0032496">
    <property type="term" value="P:response to lipopolysaccharide"/>
    <property type="evidence" value="ECO:0000270"/>
    <property type="project" value="RGD"/>
</dbReference>
<dbReference type="GO" id="GO:0007584">
    <property type="term" value="P:response to nutrient"/>
    <property type="evidence" value="ECO:0000270"/>
    <property type="project" value="RGD"/>
</dbReference>
<dbReference type="GO" id="GO:0009651">
    <property type="term" value="P:response to salt stress"/>
    <property type="evidence" value="ECO:0000270"/>
    <property type="project" value="RGD"/>
</dbReference>
<dbReference type="GO" id="GO:0033574">
    <property type="term" value="P:response to testosterone"/>
    <property type="evidence" value="ECO:0000270"/>
    <property type="project" value="RGD"/>
</dbReference>
<dbReference type="GO" id="GO:0033189">
    <property type="term" value="P:response to vitamin A"/>
    <property type="evidence" value="ECO:0000270"/>
    <property type="project" value="RGD"/>
</dbReference>
<dbReference type="FunFam" id="1.20.1250.10:FF:000013">
    <property type="entry name" value="Erythropoietin"/>
    <property type="match status" value="1"/>
</dbReference>
<dbReference type="Gene3D" id="1.20.1250.10">
    <property type="match status" value="1"/>
</dbReference>
<dbReference type="InterPro" id="IPR009079">
    <property type="entry name" value="4_helix_cytokine-like_core"/>
</dbReference>
<dbReference type="InterPro" id="IPR019767">
    <property type="entry name" value="EPO/TPO_CS"/>
</dbReference>
<dbReference type="InterPro" id="IPR001323">
    <property type="entry name" value="EPO_TPO"/>
</dbReference>
<dbReference type="InterPro" id="IPR003013">
    <property type="entry name" value="Erythroptn"/>
</dbReference>
<dbReference type="PANTHER" id="PTHR10370">
    <property type="entry name" value="ERYTHROPOIETIN"/>
    <property type="match status" value="1"/>
</dbReference>
<dbReference type="PANTHER" id="PTHR10370:SF0">
    <property type="entry name" value="ERYTHROPOIETIN"/>
    <property type="match status" value="1"/>
</dbReference>
<dbReference type="Pfam" id="PF00758">
    <property type="entry name" value="EPO_TPO"/>
    <property type="match status" value="1"/>
</dbReference>
<dbReference type="PIRSF" id="PIRSF001951">
    <property type="entry name" value="EPO"/>
    <property type="match status" value="1"/>
</dbReference>
<dbReference type="PRINTS" id="PR00272">
    <property type="entry name" value="ERYTHROPTN"/>
</dbReference>
<dbReference type="SUPFAM" id="SSF47266">
    <property type="entry name" value="4-helical cytokines"/>
    <property type="match status" value="1"/>
</dbReference>
<dbReference type="PROSITE" id="PS00817">
    <property type="entry name" value="EPO_TPO"/>
    <property type="match status" value="1"/>
</dbReference>
<comment type="function">
    <text evidence="2">Hormone involved in the regulation of erythrocyte proliferation and differentiation and the maintenance of a physiological level of circulating erythrocyte mass. Binds to EPOR leading to EPOR dimerization and JAK2 activation thereby activating specific downstream effectors, including STAT1 and STAT3.</text>
</comment>
<comment type="subcellular location">
    <subcellularLocation>
        <location>Secreted</location>
    </subcellularLocation>
</comment>
<comment type="tissue specificity">
    <text>Produced by kidney or liver of adult mammals and by liver of fetal or neonatal mammals.</text>
</comment>
<comment type="similarity">
    <text evidence="3">Belongs to the EPO/TPO family.</text>
</comment>
<proteinExistence type="evidence at transcript level"/>
<gene>
    <name type="primary">Epo</name>
</gene>
<reference key="1">
    <citation type="journal article" date="1992" name="Biochim. Biophys. Acta">
        <title>Nucleotide sequence of rat erythropoietin.</title>
        <authorList>
            <person name="Nagao M."/>
            <person name="Suga H."/>
            <person name="Okano M."/>
            <person name="Masuda S."/>
            <person name="Narita H."/>
            <person name="Ikura K."/>
            <person name="Sasaki R."/>
        </authorList>
    </citation>
    <scope>NUCLEOTIDE SEQUENCE [MRNA]</scope>
    <source>
        <strain>Wistar</strain>
        <tissue>Kidney</tissue>
    </source>
</reference>
<reference key="2">
    <citation type="journal article" date="1993" name="Blood">
        <title>Erythropoietin structure-function relationships: high degree of sequence homology among mammals.</title>
        <authorList>
            <person name="Wen D."/>
            <person name="Boissel J.-P.R."/>
            <person name="Tracy T.E."/>
            <person name="Gruninger R.H."/>
            <person name="Mulcahy L.S."/>
            <person name="Czelusniak J."/>
            <person name="Goodman M."/>
            <person name="Bunn H.F."/>
        </authorList>
    </citation>
    <scope>NUCLEOTIDE SEQUENCE [MRNA] OF 4-192</scope>
    <source>
        <strain>Sprague-Dawley</strain>
        <tissue>Kidney</tissue>
    </source>
</reference>
<name>EPO_RAT</name>
<sequence>MGVPERPTLLLLLSLLLIPLGLPVLCAPPRLICDSRVLERYILEAKEAENVTMGCAEGPRLSENITVPDTKVNFYAWKRMKVEEQAVEVWQGLSLLSEAILQAQALQANSSQPPESLQLHIDKAISGLRSLTSLLRVLGAQKELMSPPDATQAAPLRTLTADTFCKLFRVYSNFLRGKLKLYTGEACRRGDR</sequence>
<organism>
    <name type="scientific">Rattus norvegicus</name>
    <name type="common">Rat</name>
    <dbReference type="NCBI Taxonomy" id="10116"/>
    <lineage>
        <taxon>Eukaryota</taxon>
        <taxon>Metazoa</taxon>
        <taxon>Chordata</taxon>
        <taxon>Craniata</taxon>
        <taxon>Vertebrata</taxon>
        <taxon>Euteleostomi</taxon>
        <taxon>Mammalia</taxon>
        <taxon>Eutheria</taxon>
        <taxon>Euarchontoglires</taxon>
        <taxon>Glires</taxon>
        <taxon>Rodentia</taxon>
        <taxon>Myomorpha</taxon>
        <taxon>Muroidea</taxon>
        <taxon>Muridae</taxon>
        <taxon>Murinae</taxon>
        <taxon>Rattus</taxon>
    </lineage>
</organism>
<keyword id="KW-1015">Disulfide bond</keyword>
<keyword id="KW-0265">Erythrocyte maturation</keyword>
<keyword id="KW-0325">Glycoprotein</keyword>
<keyword id="KW-0372">Hormone</keyword>
<keyword id="KW-1185">Reference proteome</keyword>
<keyword id="KW-0964">Secreted</keyword>
<keyword id="KW-0732">Signal</keyword>
<protein>
    <recommendedName>
        <fullName>Erythropoietin</fullName>
    </recommendedName>
</protein>
<evidence type="ECO:0000250" key="1"/>
<evidence type="ECO:0000250" key="2">
    <source>
        <dbReference type="UniProtKB" id="P01588"/>
    </source>
</evidence>
<evidence type="ECO:0000305" key="3"/>
<feature type="signal peptide" evidence="1">
    <location>
        <begin position="1"/>
        <end position="26"/>
    </location>
</feature>
<feature type="chain" id="PRO_0000008408" description="Erythropoietin">
    <location>
        <begin position="27"/>
        <end position="192"/>
    </location>
</feature>
<feature type="glycosylation site" description="N-linked (GlcNAc...) asparagine" evidence="1">
    <location>
        <position position="50"/>
    </location>
</feature>
<feature type="glycosylation site" description="N-linked (GlcNAc...) asparagine" evidence="1">
    <location>
        <position position="64"/>
    </location>
</feature>
<feature type="glycosylation site" description="N-linked (GlcNAc...) asparagine" evidence="1">
    <location>
        <position position="109"/>
    </location>
</feature>
<feature type="disulfide bond" evidence="1">
    <location>
        <begin position="33"/>
        <end position="187"/>
    </location>
</feature>